<dbReference type="EMBL" id="AP008937">
    <property type="protein sequence ID" value="BAG26660.1"/>
    <property type="molecule type" value="Genomic_DNA"/>
</dbReference>
<dbReference type="RefSeq" id="WP_003682567.1">
    <property type="nucleotide sequence ID" value="NC_010610.1"/>
</dbReference>
<dbReference type="SMR" id="B2GAH8"/>
<dbReference type="KEGG" id="lfe:LAF_0324"/>
<dbReference type="eggNOG" id="COG2344">
    <property type="taxonomic scope" value="Bacteria"/>
</dbReference>
<dbReference type="HOGENOM" id="CLU_061534_1_1_9"/>
<dbReference type="Proteomes" id="UP000001697">
    <property type="component" value="Chromosome"/>
</dbReference>
<dbReference type="GO" id="GO:0005737">
    <property type="term" value="C:cytoplasm"/>
    <property type="evidence" value="ECO:0007669"/>
    <property type="project" value="UniProtKB-SubCell"/>
</dbReference>
<dbReference type="GO" id="GO:0003677">
    <property type="term" value="F:DNA binding"/>
    <property type="evidence" value="ECO:0007669"/>
    <property type="project" value="UniProtKB-UniRule"/>
</dbReference>
<dbReference type="GO" id="GO:0003700">
    <property type="term" value="F:DNA-binding transcription factor activity"/>
    <property type="evidence" value="ECO:0007669"/>
    <property type="project" value="UniProtKB-UniRule"/>
</dbReference>
<dbReference type="GO" id="GO:0045892">
    <property type="term" value="P:negative regulation of DNA-templated transcription"/>
    <property type="evidence" value="ECO:0007669"/>
    <property type="project" value="InterPro"/>
</dbReference>
<dbReference type="GO" id="GO:0051775">
    <property type="term" value="P:response to redox state"/>
    <property type="evidence" value="ECO:0007669"/>
    <property type="project" value="InterPro"/>
</dbReference>
<dbReference type="Gene3D" id="3.40.50.720">
    <property type="entry name" value="NAD(P)-binding Rossmann-like Domain"/>
    <property type="match status" value="1"/>
</dbReference>
<dbReference type="Gene3D" id="1.10.10.10">
    <property type="entry name" value="Winged helix-like DNA-binding domain superfamily/Winged helix DNA-binding domain"/>
    <property type="match status" value="1"/>
</dbReference>
<dbReference type="HAMAP" id="MF_01131">
    <property type="entry name" value="Rex"/>
    <property type="match status" value="1"/>
</dbReference>
<dbReference type="InterPro" id="IPR003781">
    <property type="entry name" value="CoA-bd"/>
</dbReference>
<dbReference type="InterPro" id="IPR036291">
    <property type="entry name" value="NAD(P)-bd_dom_sf"/>
</dbReference>
<dbReference type="InterPro" id="IPR009718">
    <property type="entry name" value="Rex_DNA-bd_C_dom"/>
</dbReference>
<dbReference type="InterPro" id="IPR022876">
    <property type="entry name" value="Tscrpt_rep_Rex"/>
</dbReference>
<dbReference type="InterPro" id="IPR036388">
    <property type="entry name" value="WH-like_DNA-bd_sf"/>
</dbReference>
<dbReference type="InterPro" id="IPR036390">
    <property type="entry name" value="WH_DNA-bd_sf"/>
</dbReference>
<dbReference type="NCBIfam" id="NF003989">
    <property type="entry name" value="PRK05472.1-3"/>
    <property type="match status" value="1"/>
</dbReference>
<dbReference type="NCBIfam" id="NF003991">
    <property type="entry name" value="PRK05472.1-5"/>
    <property type="match status" value="1"/>
</dbReference>
<dbReference type="NCBIfam" id="NF003994">
    <property type="entry name" value="PRK05472.2-3"/>
    <property type="match status" value="1"/>
</dbReference>
<dbReference type="NCBIfam" id="NF003995">
    <property type="entry name" value="PRK05472.2-4"/>
    <property type="match status" value="1"/>
</dbReference>
<dbReference type="NCBIfam" id="NF003996">
    <property type="entry name" value="PRK05472.2-5"/>
    <property type="match status" value="1"/>
</dbReference>
<dbReference type="PANTHER" id="PTHR35786">
    <property type="entry name" value="REDOX-SENSING TRANSCRIPTIONAL REPRESSOR REX"/>
    <property type="match status" value="1"/>
</dbReference>
<dbReference type="PANTHER" id="PTHR35786:SF1">
    <property type="entry name" value="REDOX-SENSING TRANSCRIPTIONAL REPRESSOR REX 1"/>
    <property type="match status" value="1"/>
</dbReference>
<dbReference type="Pfam" id="PF02629">
    <property type="entry name" value="CoA_binding"/>
    <property type="match status" value="1"/>
</dbReference>
<dbReference type="Pfam" id="PF06971">
    <property type="entry name" value="Put_DNA-bind_N"/>
    <property type="match status" value="1"/>
</dbReference>
<dbReference type="SMART" id="SM00881">
    <property type="entry name" value="CoA_binding"/>
    <property type="match status" value="1"/>
</dbReference>
<dbReference type="SUPFAM" id="SSF51735">
    <property type="entry name" value="NAD(P)-binding Rossmann-fold domains"/>
    <property type="match status" value="1"/>
</dbReference>
<dbReference type="SUPFAM" id="SSF46785">
    <property type="entry name" value="Winged helix' DNA-binding domain"/>
    <property type="match status" value="1"/>
</dbReference>
<proteinExistence type="inferred from homology"/>
<comment type="function">
    <text evidence="1">Modulates transcription in response to changes in cellular NADH/NAD(+) redox state.</text>
</comment>
<comment type="subunit">
    <text evidence="1">Homodimer.</text>
</comment>
<comment type="subcellular location">
    <subcellularLocation>
        <location evidence="1">Cytoplasm</location>
    </subcellularLocation>
</comment>
<comment type="similarity">
    <text evidence="1">Belongs to the transcriptional regulatory Rex family.</text>
</comment>
<keyword id="KW-0963">Cytoplasm</keyword>
<keyword id="KW-0238">DNA-binding</keyword>
<keyword id="KW-0520">NAD</keyword>
<keyword id="KW-1185">Reference proteome</keyword>
<keyword id="KW-0678">Repressor</keyword>
<keyword id="KW-0804">Transcription</keyword>
<keyword id="KW-0805">Transcription regulation</keyword>
<organism>
    <name type="scientific">Limosilactobacillus fermentum (strain NBRC 3956 / LMG 18251)</name>
    <name type="common">Lactobacillus fermentum</name>
    <dbReference type="NCBI Taxonomy" id="334390"/>
    <lineage>
        <taxon>Bacteria</taxon>
        <taxon>Bacillati</taxon>
        <taxon>Bacillota</taxon>
        <taxon>Bacilli</taxon>
        <taxon>Lactobacillales</taxon>
        <taxon>Lactobacillaceae</taxon>
        <taxon>Limosilactobacillus</taxon>
    </lineage>
</organism>
<accession>B2GAH8</accession>
<sequence length="216" mass="24110">MPNRKIPRATAKRLPVYYRYLNVLLNANKHRVSSTELSEAVQVDSATIRRDFSYFGELGKRGYGYDVEKLLNFFKGILKQDKLTSVALVGVGSLGSALMNYNFHQSTNLRISAAFDPKESLANTVKSGIPVYPVEDMKKQIKEQQIDAVILTVPGSESQAVTDQLVEAGVHGILNFTPVRLSVPKDVQVQNIDLTNELQTLIYFIESNKVTTDDED</sequence>
<gene>
    <name evidence="1" type="primary">rex</name>
    <name type="ordered locus">LAF_0324</name>
</gene>
<reference key="1">
    <citation type="journal article" date="2008" name="DNA Res.">
        <title>Comparative genome analysis of Lactobacillus reuteri and Lactobacillus fermentum reveal a genomic island for reuterin and cobalamin production.</title>
        <authorList>
            <person name="Morita H."/>
            <person name="Toh H."/>
            <person name="Fukuda S."/>
            <person name="Horikawa H."/>
            <person name="Oshima K."/>
            <person name="Suzuki T."/>
            <person name="Murakami M."/>
            <person name="Hisamatsu S."/>
            <person name="Kato Y."/>
            <person name="Takizawa T."/>
            <person name="Fukuoka H."/>
            <person name="Yoshimura T."/>
            <person name="Itoh K."/>
            <person name="O'Sullivan D.J."/>
            <person name="McKay L.L."/>
            <person name="Ohno H."/>
            <person name="Kikuchi J."/>
            <person name="Masaoka T."/>
            <person name="Hattori M."/>
        </authorList>
    </citation>
    <scope>NUCLEOTIDE SEQUENCE [LARGE SCALE GENOMIC DNA]</scope>
    <source>
        <strain>NBRC 3956 / LMG 18251</strain>
    </source>
</reference>
<evidence type="ECO:0000255" key="1">
    <source>
        <dbReference type="HAMAP-Rule" id="MF_01131"/>
    </source>
</evidence>
<protein>
    <recommendedName>
        <fullName evidence="1">Redox-sensing transcriptional repressor Rex</fullName>
    </recommendedName>
</protein>
<feature type="chain" id="PRO_1000137326" description="Redox-sensing transcriptional repressor Rex">
    <location>
        <begin position="1"/>
        <end position="216"/>
    </location>
</feature>
<feature type="DNA-binding region" description="H-T-H motif" evidence="1">
    <location>
        <begin position="16"/>
        <end position="55"/>
    </location>
</feature>
<feature type="binding site" evidence="1">
    <location>
        <begin position="90"/>
        <end position="95"/>
    </location>
    <ligand>
        <name>NAD(+)</name>
        <dbReference type="ChEBI" id="CHEBI:57540"/>
    </ligand>
</feature>
<name>REX_LIMF3</name>